<evidence type="ECO:0000255" key="1">
    <source>
        <dbReference type="HAMAP-Rule" id="MF_01309"/>
    </source>
</evidence>
<evidence type="ECO:0000305" key="2"/>
<sequence>MGQKVHPIGMRVGIIRDWDAKWYAEKEYADYLHEDLAIRKFINKELADASVSTIEIERAVNKVIVSLHTAKPGMVIGKGGANVDALRGQLNKLTGKQVHINIIEIKQPDLDAHLVGENIARQLEQRVAFRRAQKQAIQRTMRAGAKGIKTQVSGRLNGADIARAEGYSEGTVPLHTLRADIDYAWEEADTTYGKLGVKVWIYRGEVLPARKNTKGGK</sequence>
<reference key="1">
    <citation type="journal article" date="2006" name="Proc. Natl. Acad. Sci. U.S.A.">
        <title>Molecular genetic anatomy of inter- and intraserotype variation in the human bacterial pathogen group A Streptococcus.</title>
        <authorList>
            <person name="Beres S.B."/>
            <person name="Richter E.W."/>
            <person name="Nagiec M.J."/>
            <person name="Sumby P."/>
            <person name="Porcella S.F."/>
            <person name="DeLeo F.R."/>
            <person name="Musser J.M."/>
        </authorList>
    </citation>
    <scope>NUCLEOTIDE SEQUENCE [LARGE SCALE GENOMIC DNA]</scope>
    <source>
        <strain>MGAS10270</strain>
    </source>
</reference>
<gene>
    <name evidence="1" type="primary">rpsC</name>
    <name type="ordered locus">MGAS10270_Spy0052</name>
</gene>
<name>RS3_STRPD</name>
<dbReference type="EMBL" id="CP000260">
    <property type="protein sequence ID" value="ABF33117.1"/>
    <property type="molecule type" value="Genomic_DNA"/>
</dbReference>
<dbReference type="RefSeq" id="WP_000529929.1">
    <property type="nucleotide sequence ID" value="NZ_CVUH01000001.1"/>
</dbReference>
<dbReference type="SMR" id="Q1JJ56"/>
<dbReference type="GeneID" id="69900032"/>
<dbReference type="KEGG" id="sph:MGAS10270_Spy0052"/>
<dbReference type="HOGENOM" id="CLU_058591_0_2_9"/>
<dbReference type="Proteomes" id="UP000002436">
    <property type="component" value="Chromosome"/>
</dbReference>
<dbReference type="GO" id="GO:0022627">
    <property type="term" value="C:cytosolic small ribosomal subunit"/>
    <property type="evidence" value="ECO:0007669"/>
    <property type="project" value="TreeGrafter"/>
</dbReference>
<dbReference type="GO" id="GO:0003729">
    <property type="term" value="F:mRNA binding"/>
    <property type="evidence" value="ECO:0007669"/>
    <property type="project" value="UniProtKB-UniRule"/>
</dbReference>
<dbReference type="GO" id="GO:0019843">
    <property type="term" value="F:rRNA binding"/>
    <property type="evidence" value="ECO:0007669"/>
    <property type="project" value="UniProtKB-UniRule"/>
</dbReference>
<dbReference type="GO" id="GO:0003735">
    <property type="term" value="F:structural constituent of ribosome"/>
    <property type="evidence" value="ECO:0007669"/>
    <property type="project" value="InterPro"/>
</dbReference>
<dbReference type="GO" id="GO:0006412">
    <property type="term" value="P:translation"/>
    <property type="evidence" value="ECO:0007669"/>
    <property type="project" value="UniProtKB-UniRule"/>
</dbReference>
<dbReference type="CDD" id="cd02412">
    <property type="entry name" value="KH-II_30S_S3"/>
    <property type="match status" value="1"/>
</dbReference>
<dbReference type="FunFam" id="3.30.1140.32:FF:000001">
    <property type="entry name" value="30S ribosomal protein S3"/>
    <property type="match status" value="1"/>
</dbReference>
<dbReference type="FunFam" id="3.30.300.20:FF:000001">
    <property type="entry name" value="30S ribosomal protein S3"/>
    <property type="match status" value="1"/>
</dbReference>
<dbReference type="Gene3D" id="3.30.300.20">
    <property type="match status" value="1"/>
</dbReference>
<dbReference type="Gene3D" id="3.30.1140.32">
    <property type="entry name" value="Ribosomal protein S3, C-terminal domain"/>
    <property type="match status" value="1"/>
</dbReference>
<dbReference type="HAMAP" id="MF_01309_B">
    <property type="entry name" value="Ribosomal_uS3_B"/>
    <property type="match status" value="1"/>
</dbReference>
<dbReference type="InterPro" id="IPR004087">
    <property type="entry name" value="KH_dom"/>
</dbReference>
<dbReference type="InterPro" id="IPR015946">
    <property type="entry name" value="KH_dom-like_a/b"/>
</dbReference>
<dbReference type="InterPro" id="IPR004044">
    <property type="entry name" value="KH_dom_type_2"/>
</dbReference>
<dbReference type="InterPro" id="IPR009019">
    <property type="entry name" value="KH_sf_prok-type"/>
</dbReference>
<dbReference type="InterPro" id="IPR036419">
    <property type="entry name" value="Ribosomal_S3_C_sf"/>
</dbReference>
<dbReference type="InterPro" id="IPR005704">
    <property type="entry name" value="Ribosomal_uS3_bac-typ"/>
</dbReference>
<dbReference type="InterPro" id="IPR001351">
    <property type="entry name" value="Ribosomal_uS3_C"/>
</dbReference>
<dbReference type="InterPro" id="IPR018280">
    <property type="entry name" value="Ribosomal_uS3_CS"/>
</dbReference>
<dbReference type="NCBIfam" id="TIGR01009">
    <property type="entry name" value="rpsC_bact"/>
    <property type="match status" value="1"/>
</dbReference>
<dbReference type="PANTHER" id="PTHR11760">
    <property type="entry name" value="30S/40S RIBOSOMAL PROTEIN S3"/>
    <property type="match status" value="1"/>
</dbReference>
<dbReference type="PANTHER" id="PTHR11760:SF19">
    <property type="entry name" value="SMALL RIBOSOMAL SUBUNIT PROTEIN US3C"/>
    <property type="match status" value="1"/>
</dbReference>
<dbReference type="Pfam" id="PF07650">
    <property type="entry name" value="KH_2"/>
    <property type="match status" value="1"/>
</dbReference>
<dbReference type="Pfam" id="PF00189">
    <property type="entry name" value="Ribosomal_S3_C"/>
    <property type="match status" value="1"/>
</dbReference>
<dbReference type="SMART" id="SM00322">
    <property type="entry name" value="KH"/>
    <property type="match status" value="1"/>
</dbReference>
<dbReference type="SUPFAM" id="SSF54814">
    <property type="entry name" value="Prokaryotic type KH domain (KH-domain type II)"/>
    <property type="match status" value="1"/>
</dbReference>
<dbReference type="SUPFAM" id="SSF54821">
    <property type="entry name" value="Ribosomal protein S3 C-terminal domain"/>
    <property type="match status" value="1"/>
</dbReference>
<dbReference type="PROSITE" id="PS50823">
    <property type="entry name" value="KH_TYPE_2"/>
    <property type="match status" value="1"/>
</dbReference>
<dbReference type="PROSITE" id="PS00548">
    <property type="entry name" value="RIBOSOMAL_S3"/>
    <property type="match status" value="1"/>
</dbReference>
<keyword id="KW-0687">Ribonucleoprotein</keyword>
<keyword id="KW-0689">Ribosomal protein</keyword>
<keyword id="KW-0694">RNA-binding</keyword>
<keyword id="KW-0699">rRNA-binding</keyword>
<protein>
    <recommendedName>
        <fullName evidence="1">Small ribosomal subunit protein uS3</fullName>
    </recommendedName>
    <alternativeName>
        <fullName evidence="2">30S ribosomal protein S3</fullName>
    </alternativeName>
</protein>
<accession>Q1JJ56</accession>
<proteinExistence type="inferred from homology"/>
<feature type="chain" id="PRO_0000293896" description="Small ribosomal subunit protein uS3">
    <location>
        <begin position="1"/>
        <end position="217"/>
    </location>
</feature>
<feature type="domain" description="KH type-2" evidence="1">
    <location>
        <begin position="38"/>
        <end position="106"/>
    </location>
</feature>
<comment type="function">
    <text evidence="1">Binds the lower part of the 30S subunit head. Binds mRNA in the 70S ribosome, positioning it for translation.</text>
</comment>
<comment type="subunit">
    <text evidence="1">Part of the 30S ribosomal subunit. Forms a tight complex with proteins S10 and S14.</text>
</comment>
<comment type="similarity">
    <text evidence="1">Belongs to the universal ribosomal protein uS3 family.</text>
</comment>
<organism>
    <name type="scientific">Streptococcus pyogenes serotype M2 (strain MGAS10270)</name>
    <dbReference type="NCBI Taxonomy" id="370552"/>
    <lineage>
        <taxon>Bacteria</taxon>
        <taxon>Bacillati</taxon>
        <taxon>Bacillota</taxon>
        <taxon>Bacilli</taxon>
        <taxon>Lactobacillales</taxon>
        <taxon>Streptococcaceae</taxon>
        <taxon>Streptococcus</taxon>
    </lineage>
</organism>